<comment type="function">
    <text>Removes, in the presence of oxygen, 4 hydrogen atoms from delta-L-(alpha-aminoadipyl)-L-cysteinyl-D-valine (ACV) to form the azetidinone and thiazolidine rings of isopenicillin.</text>
</comment>
<comment type="catalytic activity">
    <reaction>
        <text>N-[(5S)-5-amino-5-carboxypentanoyl]-L-cysteinyl-D-valine + O2 = isopenicillin N + 2 H2O</text>
        <dbReference type="Rhea" id="RHEA:22428"/>
        <dbReference type="ChEBI" id="CHEBI:15377"/>
        <dbReference type="ChEBI" id="CHEBI:15379"/>
        <dbReference type="ChEBI" id="CHEBI:58399"/>
        <dbReference type="ChEBI" id="CHEBI:58572"/>
        <dbReference type="EC" id="1.21.3.1"/>
    </reaction>
</comment>
<comment type="cofactor">
    <cofactor>
        <name>Fe cation</name>
        <dbReference type="ChEBI" id="CHEBI:24875"/>
    </cofactor>
</comment>
<comment type="cofactor">
    <cofactor>
        <name>L-ascorbate</name>
        <dbReference type="ChEBI" id="CHEBI:38290"/>
    </cofactor>
</comment>
<comment type="pathway">
    <text>Antibiotic biosynthesis; penicillin G biosynthesis; penicillin G from L-alpha-aminoadipate and L-cysteine and L-valine: step 2/3.</text>
</comment>
<comment type="similarity">
    <text evidence="3">Belongs to the iron/ascorbate-dependent oxidoreductase family.</text>
</comment>
<feature type="chain" id="PRO_0000219506" description="Isopenicillin N synthase">
    <location>
        <begin position="1"/>
        <end position="329"/>
    </location>
</feature>
<feature type="domain" description="Fe2OG dioxygenase" evidence="2">
    <location>
        <begin position="180"/>
        <end position="286"/>
    </location>
</feature>
<feature type="binding site" evidence="1">
    <location>
        <position position="87"/>
    </location>
    <ligand>
        <name>isopenicillin N</name>
        <dbReference type="ChEBI" id="CHEBI:58399"/>
    </ligand>
</feature>
<feature type="binding site" evidence="1">
    <location>
        <position position="87"/>
    </location>
    <ligand>
        <name>N-[(5S)-5-amino-5-carboxypentanoyl]-L-cysteinyl-D-valine</name>
        <dbReference type="ChEBI" id="CHEBI:58572"/>
    </ligand>
</feature>
<feature type="binding site" evidence="1">
    <location>
        <position position="91"/>
    </location>
    <ligand>
        <name>isopenicillin N</name>
        <dbReference type="ChEBI" id="CHEBI:58399"/>
    </ligand>
</feature>
<feature type="binding site" evidence="1">
    <location>
        <position position="91"/>
    </location>
    <ligand>
        <name>N-[(5S)-5-amino-5-carboxypentanoyl]-L-cysteinyl-D-valine</name>
        <dbReference type="ChEBI" id="CHEBI:58572"/>
    </ligand>
</feature>
<feature type="binding site" evidence="1">
    <location>
        <position position="189"/>
    </location>
    <ligand>
        <name>isopenicillin N</name>
        <dbReference type="ChEBI" id="CHEBI:58399"/>
    </ligand>
</feature>
<feature type="binding site" evidence="1">
    <location>
        <position position="189"/>
    </location>
    <ligand>
        <name>N-[(5S)-5-amino-5-carboxypentanoyl]-L-cysteinyl-D-valine</name>
        <dbReference type="ChEBI" id="CHEBI:58572"/>
    </ligand>
</feature>
<feature type="binding site" evidence="2">
    <location>
        <position position="212"/>
    </location>
    <ligand>
        <name>Fe(2+)</name>
        <dbReference type="ChEBI" id="CHEBI:29033"/>
    </ligand>
</feature>
<feature type="binding site" evidence="1">
    <location>
        <position position="212"/>
    </location>
    <ligand>
        <name>N-[(5S)-5-amino-5-carboxypentanoyl]-L-cysteinyl-D-valine</name>
        <dbReference type="ChEBI" id="CHEBI:58572"/>
    </ligand>
</feature>
<feature type="binding site" evidence="2">
    <location>
        <position position="214"/>
    </location>
    <ligand>
        <name>Fe(2+)</name>
        <dbReference type="ChEBI" id="CHEBI:29033"/>
    </ligand>
</feature>
<feature type="binding site" evidence="1">
    <location>
        <position position="214"/>
    </location>
    <ligand>
        <name>N-[(5S)-5-amino-5-carboxypentanoyl]-L-cysteinyl-D-valine</name>
        <dbReference type="ChEBI" id="CHEBI:58572"/>
    </ligand>
</feature>
<feature type="binding site" evidence="2">
    <location>
        <position position="268"/>
    </location>
    <ligand>
        <name>Fe(2+)</name>
        <dbReference type="ChEBI" id="CHEBI:29033"/>
    </ligand>
</feature>
<feature type="binding site" evidence="2">
    <location>
        <position position="277"/>
    </location>
    <ligand>
        <name>2-oxoglutarate</name>
        <dbReference type="ChEBI" id="CHEBI:16810"/>
    </ligand>
</feature>
<feature type="binding site" evidence="1">
    <location>
        <position position="279"/>
    </location>
    <ligand>
        <name>isopenicillin N</name>
        <dbReference type="ChEBI" id="CHEBI:58399"/>
    </ligand>
</feature>
<feature type="binding site" evidence="1">
    <location>
        <position position="279"/>
    </location>
    <ligand>
        <name>N-[(5S)-5-amino-5-carboxypentanoyl]-L-cysteinyl-D-valine</name>
        <dbReference type="ChEBI" id="CHEBI:58572"/>
    </ligand>
</feature>
<organism>
    <name type="scientific">Streptomyces griseus</name>
    <dbReference type="NCBI Taxonomy" id="1911"/>
    <lineage>
        <taxon>Bacteria</taxon>
        <taxon>Bacillati</taxon>
        <taxon>Actinomycetota</taxon>
        <taxon>Actinomycetes</taxon>
        <taxon>Kitasatosporales</taxon>
        <taxon>Streptomycetaceae</taxon>
        <taxon>Streptomyces</taxon>
    </lineage>
</organism>
<name>IPNS_STRGR</name>
<dbReference type="EC" id="1.21.3.1"/>
<dbReference type="EMBL" id="X54609">
    <property type="protein sequence ID" value="CAA38431.1"/>
    <property type="molecule type" value="Genomic_DNA"/>
</dbReference>
<dbReference type="PIR" id="A61155">
    <property type="entry name" value="A61155"/>
</dbReference>
<dbReference type="SMR" id="Q54243"/>
<dbReference type="BRENDA" id="1.21.3.1">
    <property type="organism ID" value="6035"/>
</dbReference>
<dbReference type="UniPathway" id="UPA00149">
    <property type="reaction ID" value="UER00240"/>
</dbReference>
<dbReference type="GO" id="GO:0005506">
    <property type="term" value="F:iron ion binding"/>
    <property type="evidence" value="ECO:0007669"/>
    <property type="project" value="InterPro"/>
</dbReference>
<dbReference type="GO" id="GO:0016216">
    <property type="term" value="F:isopenicillin-N synthase activity"/>
    <property type="evidence" value="ECO:0007669"/>
    <property type="project" value="UniProtKB-EC"/>
</dbReference>
<dbReference type="GO" id="GO:0031418">
    <property type="term" value="F:L-ascorbic acid binding"/>
    <property type="evidence" value="ECO:0007669"/>
    <property type="project" value="UniProtKB-KW"/>
</dbReference>
<dbReference type="GO" id="GO:0017000">
    <property type="term" value="P:antibiotic biosynthetic process"/>
    <property type="evidence" value="ECO:0007669"/>
    <property type="project" value="UniProtKB-KW"/>
</dbReference>
<dbReference type="Gene3D" id="2.60.120.330">
    <property type="entry name" value="B-lactam Antibiotic, Isopenicillin N Synthase, Chain"/>
    <property type="match status" value="1"/>
</dbReference>
<dbReference type="InterPro" id="IPR026992">
    <property type="entry name" value="DIOX_N"/>
</dbReference>
<dbReference type="InterPro" id="IPR044861">
    <property type="entry name" value="IPNS-like_FE2OG_OXY"/>
</dbReference>
<dbReference type="InterPro" id="IPR027443">
    <property type="entry name" value="IPNS-like_sf"/>
</dbReference>
<dbReference type="InterPro" id="IPR050231">
    <property type="entry name" value="Iron_ascorbate_oxido_reductase"/>
</dbReference>
<dbReference type="InterPro" id="IPR002057">
    <property type="entry name" value="Isopenicillin-N_synth_CS"/>
</dbReference>
<dbReference type="InterPro" id="IPR005123">
    <property type="entry name" value="Oxoglu/Fe-dep_dioxygenase_dom"/>
</dbReference>
<dbReference type="PANTHER" id="PTHR47990">
    <property type="entry name" value="2-OXOGLUTARATE (2OG) AND FE(II)-DEPENDENT OXYGENASE SUPERFAMILY PROTEIN-RELATED"/>
    <property type="match status" value="1"/>
</dbReference>
<dbReference type="Pfam" id="PF03171">
    <property type="entry name" value="2OG-FeII_Oxy"/>
    <property type="match status" value="1"/>
</dbReference>
<dbReference type="Pfam" id="PF14226">
    <property type="entry name" value="DIOX_N"/>
    <property type="match status" value="1"/>
</dbReference>
<dbReference type="PRINTS" id="PR00682">
    <property type="entry name" value="IPNSYNTHASE"/>
</dbReference>
<dbReference type="SUPFAM" id="SSF51197">
    <property type="entry name" value="Clavaminate synthase-like"/>
    <property type="match status" value="1"/>
</dbReference>
<dbReference type="PROSITE" id="PS51471">
    <property type="entry name" value="FE2OG_OXY"/>
    <property type="match status" value="1"/>
</dbReference>
<dbReference type="PROSITE" id="PS00185">
    <property type="entry name" value="IPNS_1"/>
    <property type="match status" value="1"/>
</dbReference>
<dbReference type="PROSITE" id="PS00186">
    <property type="entry name" value="IPNS_2"/>
    <property type="match status" value="1"/>
</dbReference>
<sequence>MPIPMLPAHVPTIDISPLSGGDADDKKRVAQEINKACRESGFFYASHHGIDVQLLKDVVNEFHRTMTDEEKYDLAINAYNKNNPRTRNGYYMAVKGKKAVESWCYLNPSFSEDHPQIRSGTPMHEGNIWPDEKRHQRFRPFCEQYYRDVFSLSKVLMRGFALALGKPEDFFDASLSLADTLSAVTLIHYPYLEDYPPVKTGPDGTKLSFEDHLDVSMITVLFQTEVQNLQVETADGWQDLPTSGENFLVNCGTYMGYLTNDYFPAPNHRVKFINAERLSLPFFLHAGHTTVMEPFSPEDTRGKELNPPVRYGDYLQQASNALIAKNGQT</sequence>
<proteinExistence type="inferred from homology"/>
<evidence type="ECO:0000250" key="1">
    <source>
        <dbReference type="UniProtKB" id="P05326"/>
    </source>
</evidence>
<evidence type="ECO:0000255" key="2">
    <source>
        <dbReference type="PROSITE-ProRule" id="PRU00805"/>
    </source>
</evidence>
<evidence type="ECO:0000305" key="3"/>
<protein>
    <recommendedName>
        <fullName>Isopenicillin N synthase</fullName>
        <shortName>IPNS</shortName>
        <ecNumber>1.21.3.1</ecNumber>
    </recommendedName>
</protein>
<accession>Q54243</accession>
<keyword id="KW-0045">Antibiotic biosynthesis</keyword>
<keyword id="KW-0408">Iron</keyword>
<keyword id="KW-0479">Metal-binding</keyword>
<keyword id="KW-0560">Oxidoreductase</keyword>
<keyword id="KW-0847">Vitamin C</keyword>
<gene>
    <name type="primary">pcbC</name>
</gene>
<reference key="1">
    <citation type="journal article" date="1991" name="Antimicrob. Agents Chemother.">
        <title>Cloning and characterization of the isopenicillin N synthase gene of Streptomyces griseus NRRL 3851 and studies of expression and complementation of the cephamycin pathway in Streptomyces clavuligerus.</title>
        <authorList>
            <person name="Garcia-Dominguea M."/>
            <person name="Liras P."/>
            <person name="Martin J.F."/>
        </authorList>
    </citation>
    <scope>NUCLEOTIDE SEQUENCE [GENOMIC DNA]</scope>
    <source>
        <strain>JCM 5012 / NBRC 13304 / NRRL 3851 / KCC S-1012 / MA-2837</strain>
    </source>
</reference>